<organism>
    <name type="scientific">Thermobifida fusca (strain YX)</name>
    <dbReference type="NCBI Taxonomy" id="269800"/>
    <lineage>
        <taxon>Bacteria</taxon>
        <taxon>Bacillati</taxon>
        <taxon>Actinomycetota</taxon>
        <taxon>Actinomycetes</taxon>
        <taxon>Streptosporangiales</taxon>
        <taxon>Nocardiopsidaceae</taxon>
        <taxon>Thermobifida</taxon>
    </lineage>
</organism>
<comment type="function">
    <text evidence="1">Catalyzes the sequential NAD-dependent oxidations of L-histidinol to L-histidinaldehyde and then to L-histidine.</text>
</comment>
<comment type="catalytic activity">
    <reaction evidence="1">
        <text>L-histidinol + 2 NAD(+) + H2O = L-histidine + 2 NADH + 3 H(+)</text>
        <dbReference type="Rhea" id="RHEA:20641"/>
        <dbReference type="ChEBI" id="CHEBI:15377"/>
        <dbReference type="ChEBI" id="CHEBI:15378"/>
        <dbReference type="ChEBI" id="CHEBI:57540"/>
        <dbReference type="ChEBI" id="CHEBI:57595"/>
        <dbReference type="ChEBI" id="CHEBI:57699"/>
        <dbReference type="ChEBI" id="CHEBI:57945"/>
        <dbReference type="EC" id="1.1.1.23"/>
    </reaction>
</comment>
<comment type="cofactor">
    <cofactor evidence="1">
        <name>Zn(2+)</name>
        <dbReference type="ChEBI" id="CHEBI:29105"/>
    </cofactor>
    <text evidence="1">Binds 1 zinc ion per subunit.</text>
</comment>
<comment type="pathway">
    <text evidence="1">Amino-acid biosynthesis; L-histidine biosynthesis; L-histidine from 5-phospho-alpha-D-ribose 1-diphosphate: step 9/9.</text>
</comment>
<comment type="similarity">
    <text evidence="1">Belongs to the histidinol dehydrogenase family.</text>
</comment>
<dbReference type="EC" id="1.1.1.23" evidence="1"/>
<dbReference type="EMBL" id="CP000088">
    <property type="protein sequence ID" value="AAZ55188.1"/>
    <property type="molecule type" value="Genomic_DNA"/>
</dbReference>
<dbReference type="SMR" id="Q47QS9"/>
<dbReference type="STRING" id="269800.Tfu_1150"/>
<dbReference type="KEGG" id="tfu:Tfu_1150"/>
<dbReference type="eggNOG" id="COG0141">
    <property type="taxonomic scope" value="Bacteria"/>
</dbReference>
<dbReference type="HOGENOM" id="CLU_006732_3_1_11"/>
<dbReference type="UniPathway" id="UPA00031">
    <property type="reaction ID" value="UER00014"/>
</dbReference>
<dbReference type="GO" id="GO:0005829">
    <property type="term" value="C:cytosol"/>
    <property type="evidence" value="ECO:0007669"/>
    <property type="project" value="TreeGrafter"/>
</dbReference>
<dbReference type="GO" id="GO:0004399">
    <property type="term" value="F:histidinol dehydrogenase activity"/>
    <property type="evidence" value="ECO:0007669"/>
    <property type="project" value="UniProtKB-UniRule"/>
</dbReference>
<dbReference type="GO" id="GO:0051287">
    <property type="term" value="F:NAD binding"/>
    <property type="evidence" value="ECO:0007669"/>
    <property type="project" value="InterPro"/>
</dbReference>
<dbReference type="GO" id="GO:0008270">
    <property type="term" value="F:zinc ion binding"/>
    <property type="evidence" value="ECO:0007669"/>
    <property type="project" value="UniProtKB-UniRule"/>
</dbReference>
<dbReference type="GO" id="GO:0000105">
    <property type="term" value="P:L-histidine biosynthetic process"/>
    <property type="evidence" value="ECO:0007669"/>
    <property type="project" value="UniProtKB-UniRule"/>
</dbReference>
<dbReference type="CDD" id="cd06572">
    <property type="entry name" value="Histidinol_dh"/>
    <property type="match status" value="1"/>
</dbReference>
<dbReference type="FunFam" id="3.40.50.1980:FF:000001">
    <property type="entry name" value="Histidinol dehydrogenase"/>
    <property type="match status" value="1"/>
</dbReference>
<dbReference type="Gene3D" id="1.20.5.1300">
    <property type="match status" value="1"/>
</dbReference>
<dbReference type="Gene3D" id="3.40.50.1980">
    <property type="entry name" value="Nitrogenase molybdenum iron protein domain"/>
    <property type="match status" value="2"/>
</dbReference>
<dbReference type="HAMAP" id="MF_01024">
    <property type="entry name" value="HisD"/>
    <property type="match status" value="1"/>
</dbReference>
<dbReference type="InterPro" id="IPR016161">
    <property type="entry name" value="Ald_DH/histidinol_DH"/>
</dbReference>
<dbReference type="InterPro" id="IPR001692">
    <property type="entry name" value="Histidinol_DH_CS"/>
</dbReference>
<dbReference type="InterPro" id="IPR022695">
    <property type="entry name" value="Histidinol_DH_monofunct"/>
</dbReference>
<dbReference type="InterPro" id="IPR012131">
    <property type="entry name" value="Hstdl_DH"/>
</dbReference>
<dbReference type="NCBIfam" id="TIGR00069">
    <property type="entry name" value="hisD"/>
    <property type="match status" value="1"/>
</dbReference>
<dbReference type="PANTHER" id="PTHR21256:SF2">
    <property type="entry name" value="HISTIDINE BIOSYNTHESIS TRIFUNCTIONAL PROTEIN"/>
    <property type="match status" value="1"/>
</dbReference>
<dbReference type="PANTHER" id="PTHR21256">
    <property type="entry name" value="HISTIDINOL DEHYDROGENASE HDH"/>
    <property type="match status" value="1"/>
</dbReference>
<dbReference type="Pfam" id="PF00815">
    <property type="entry name" value="Histidinol_dh"/>
    <property type="match status" value="1"/>
</dbReference>
<dbReference type="PIRSF" id="PIRSF000099">
    <property type="entry name" value="Histidinol_dh"/>
    <property type="match status" value="1"/>
</dbReference>
<dbReference type="PRINTS" id="PR00083">
    <property type="entry name" value="HOLDHDRGNASE"/>
</dbReference>
<dbReference type="SUPFAM" id="SSF53720">
    <property type="entry name" value="ALDH-like"/>
    <property type="match status" value="1"/>
</dbReference>
<dbReference type="PROSITE" id="PS00611">
    <property type="entry name" value="HISOL_DEHYDROGENASE"/>
    <property type="match status" value="1"/>
</dbReference>
<protein>
    <recommendedName>
        <fullName evidence="1">Histidinol dehydrogenase</fullName>
        <shortName evidence="1">HDH</shortName>
        <ecNumber evidence="1">1.1.1.23</ecNumber>
    </recommendedName>
</protein>
<proteinExistence type="inferred from homology"/>
<feature type="chain" id="PRO_0000135868" description="Histidinol dehydrogenase">
    <location>
        <begin position="1"/>
        <end position="438"/>
    </location>
</feature>
<feature type="active site" description="Proton acceptor" evidence="1">
    <location>
        <position position="330"/>
    </location>
</feature>
<feature type="active site" description="Proton acceptor" evidence="1">
    <location>
        <position position="331"/>
    </location>
</feature>
<feature type="binding site" evidence="1">
    <location>
        <position position="129"/>
    </location>
    <ligand>
        <name>NAD(+)</name>
        <dbReference type="ChEBI" id="CHEBI:57540"/>
    </ligand>
</feature>
<feature type="binding site" evidence="1">
    <location>
        <position position="193"/>
    </location>
    <ligand>
        <name>NAD(+)</name>
        <dbReference type="ChEBI" id="CHEBI:57540"/>
    </ligand>
</feature>
<feature type="binding site" evidence="1">
    <location>
        <position position="216"/>
    </location>
    <ligand>
        <name>NAD(+)</name>
        <dbReference type="ChEBI" id="CHEBI:57540"/>
    </ligand>
</feature>
<feature type="binding site" evidence="1">
    <location>
        <position position="239"/>
    </location>
    <ligand>
        <name>substrate</name>
    </ligand>
</feature>
<feature type="binding site" evidence="1">
    <location>
        <position position="261"/>
    </location>
    <ligand>
        <name>substrate</name>
    </ligand>
</feature>
<feature type="binding site" evidence="1">
    <location>
        <position position="261"/>
    </location>
    <ligand>
        <name>Zn(2+)</name>
        <dbReference type="ChEBI" id="CHEBI:29105"/>
    </ligand>
</feature>
<feature type="binding site" evidence="1">
    <location>
        <position position="264"/>
    </location>
    <ligand>
        <name>substrate</name>
    </ligand>
</feature>
<feature type="binding site" evidence="1">
    <location>
        <position position="264"/>
    </location>
    <ligand>
        <name>Zn(2+)</name>
        <dbReference type="ChEBI" id="CHEBI:29105"/>
    </ligand>
</feature>
<feature type="binding site" evidence="1">
    <location>
        <position position="331"/>
    </location>
    <ligand>
        <name>substrate</name>
    </ligand>
</feature>
<feature type="binding site" evidence="1">
    <location>
        <position position="364"/>
    </location>
    <ligand>
        <name>substrate</name>
    </ligand>
</feature>
<feature type="binding site" evidence="1">
    <location>
        <position position="364"/>
    </location>
    <ligand>
        <name>Zn(2+)</name>
        <dbReference type="ChEBI" id="CHEBI:29105"/>
    </ligand>
</feature>
<feature type="binding site" evidence="1">
    <location>
        <position position="418"/>
    </location>
    <ligand>
        <name>substrate</name>
    </ligand>
</feature>
<feature type="binding site" evidence="1">
    <location>
        <position position="423"/>
    </location>
    <ligand>
        <name>substrate</name>
    </ligand>
</feature>
<feature type="binding site" evidence="1">
    <location>
        <position position="423"/>
    </location>
    <ligand>
        <name>Zn(2+)</name>
        <dbReference type="ChEBI" id="CHEBI:29105"/>
    </ligand>
</feature>
<accession>Q47QS9</accession>
<evidence type="ECO:0000255" key="1">
    <source>
        <dbReference type="HAMAP-Rule" id="MF_01024"/>
    </source>
</evidence>
<sequence length="438" mass="45811">MRSVISRIDLRGNPADPRASLPRAEIDVASAVEKVRPICEDVRHRGVEALIELGERFDGVRPAHIRVPADALETALAGLDRTVRAALEEAIRRARIVHRDQRRTDTTTRVVPGGTVTERWVPVDRVGLYVPGGRAVYPSSVVMNVVPAQEAGVPSLAVASPPQAEFGGLPHPTILAACALLGVDEVYAVGGAQAIAMFAYGAGECAPVSMVTGPGNIWVAAAKRLLKGIIGIDSEAGPTEIAILADDTANPAYVAADLISQAEHDVVAASVLVTPSTALADRVEAELARQVPAAKHRERITQALGGPQSGIVLVDDIDHGLDVVNAYAPEHLEVMTADAQSVAARVRNAGAIFIGDHSPVSLGDYCAGSNHVLPTGGVAVHSSGLSVQSFLRGIHVVEYDRAALAEVAHHVVALAEAEDLPAHGAAVTARIPREEQQA</sequence>
<name>HISX_THEFY</name>
<keyword id="KW-0028">Amino-acid biosynthesis</keyword>
<keyword id="KW-0368">Histidine biosynthesis</keyword>
<keyword id="KW-0479">Metal-binding</keyword>
<keyword id="KW-0520">NAD</keyword>
<keyword id="KW-0560">Oxidoreductase</keyword>
<keyword id="KW-0862">Zinc</keyword>
<reference key="1">
    <citation type="journal article" date="2007" name="J. Bacteriol.">
        <title>Genome sequence and analysis of the soil cellulolytic actinomycete Thermobifida fusca YX.</title>
        <authorList>
            <person name="Lykidis A."/>
            <person name="Mavromatis K."/>
            <person name="Ivanova N."/>
            <person name="Anderson I."/>
            <person name="Land M."/>
            <person name="DiBartolo G."/>
            <person name="Martinez M."/>
            <person name="Lapidus A."/>
            <person name="Lucas S."/>
            <person name="Copeland A."/>
            <person name="Richardson P."/>
            <person name="Wilson D.B."/>
            <person name="Kyrpides N."/>
        </authorList>
    </citation>
    <scope>NUCLEOTIDE SEQUENCE [LARGE SCALE GENOMIC DNA]</scope>
    <source>
        <strain>YX</strain>
    </source>
</reference>
<gene>
    <name evidence="1" type="primary">hisD</name>
    <name type="ordered locus">Tfu_1150</name>
</gene>